<feature type="chain" id="PRO_0000295960" description="Small ribosomal subunit protein uS12">
    <location>
        <begin position="1"/>
        <end position="126"/>
    </location>
</feature>
<feature type="region of interest" description="Disordered" evidence="3">
    <location>
        <begin position="1"/>
        <end position="28"/>
    </location>
</feature>
<feature type="region of interest" description="Disordered" evidence="3">
    <location>
        <begin position="103"/>
        <end position="126"/>
    </location>
</feature>
<feature type="compositionally biased region" description="Basic residues" evidence="3">
    <location>
        <begin position="113"/>
        <end position="126"/>
    </location>
</feature>
<feature type="modified residue" description="3-methylthioaspartic acid" evidence="1">
    <location>
        <position position="89"/>
    </location>
</feature>
<reference key="1">
    <citation type="submission" date="2006-08" db="EMBL/GenBank/DDBJ databases">
        <title>Complete sequence of chromosome 1 of Burkholderia cenocepacia HI2424.</title>
        <authorList>
            <person name="Copeland A."/>
            <person name="Lucas S."/>
            <person name="Lapidus A."/>
            <person name="Barry K."/>
            <person name="Detter J.C."/>
            <person name="Glavina del Rio T."/>
            <person name="Hammon N."/>
            <person name="Israni S."/>
            <person name="Pitluck S."/>
            <person name="Chain P."/>
            <person name="Malfatti S."/>
            <person name="Shin M."/>
            <person name="Vergez L."/>
            <person name="Schmutz J."/>
            <person name="Larimer F."/>
            <person name="Land M."/>
            <person name="Hauser L."/>
            <person name="Kyrpides N."/>
            <person name="Kim E."/>
            <person name="LiPuma J.J."/>
            <person name="Gonzalez C.F."/>
            <person name="Konstantinidis K."/>
            <person name="Tiedje J.M."/>
            <person name="Richardson P."/>
        </authorList>
    </citation>
    <scope>NUCLEOTIDE SEQUENCE [LARGE SCALE GENOMIC DNA]</scope>
    <source>
        <strain>HI2424</strain>
    </source>
</reference>
<keyword id="KW-0488">Methylation</keyword>
<keyword id="KW-0687">Ribonucleoprotein</keyword>
<keyword id="KW-0689">Ribosomal protein</keyword>
<keyword id="KW-0694">RNA-binding</keyword>
<keyword id="KW-0699">rRNA-binding</keyword>
<keyword id="KW-0820">tRNA-binding</keyword>
<accession>A0K3M0</accession>
<evidence type="ECO:0000250" key="1"/>
<evidence type="ECO:0000255" key="2">
    <source>
        <dbReference type="HAMAP-Rule" id="MF_00403"/>
    </source>
</evidence>
<evidence type="ECO:0000256" key="3">
    <source>
        <dbReference type="SAM" id="MobiDB-lite"/>
    </source>
</evidence>
<evidence type="ECO:0000305" key="4"/>
<dbReference type="EMBL" id="CP000458">
    <property type="protein sequence ID" value="ABK07097.1"/>
    <property type="molecule type" value="Genomic_DNA"/>
</dbReference>
<dbReference type="RefSeq" id="WP_006400662.1">
    <property type="nucleotide sequence ID" value="NC_008542.1"/>
</dbReference>
<dbReference type="SMR" id="A0K3M0"/>
<dbReference type="GeneID" id="98108172"/>
<dbReference type="KEGG" id="bch:Bcen2424_0343"/>
<dbReference type="HOGENOM" id="CLU_104295_1_2_4"/>
<dbReference type="GO" id="GO:0015935">
    <property type="term" value="C:small ribosomal subunit"/>
    <property type="evidence" value="ECO:0007669"/>
    <property type="project" value="InterPro"/>
</dbReference>
<dbReference type="GO" id="GO:0019843">
    <property type="term" value="F:rRNA binding"/>
    <property type="evidence" value="ECO:0007669"/>
    <property type="project" value="UniProtKB-UniRule"/>
</dbReference>
<dbReference type="GO" id="GO:0003735">
    <property type="term" value="F:structural constituent of ribosome"/>
    <property type="evidence" value="ECO:0007669"/>
    <property type="project" value="InterPro"/>
</dbReference>
<dbReference type="GO" id="GO:0000049">
    <property type="term" value="F:tRNA binding"/>
    <property type="evidence" value="ECO:0007669"/>
    <property type="project" value="UniProtKB-UniRule"/>
</dbReference>
<dbReference type="GO" id="GO:0006412">
    <property type="term" value="P:translation"/>
    <property type="evidence" value="ECO:0007669"/>
    <property type="project" value="UniProtKB-UniRule"/>
</dbReference>
<dbReference type="CDD" id="cd03368">
    <property type="entry name" value="Ribosomal_S12"/>
    <property type="match status" value="1"/>
</dbReference>
<dbReference type="FunFam" id="2.40.50.140:FF:000001">
    <property type="entry name" value="30S ribosomal protein S12"/>
    <property type="match status" value="1"/>
</dbReference>
<dbReference type="Gene3D" id="2.40.50.140">
    <property type="entry name" value="Nucleic acid-binding proteins"/>
    <property type="match status" value="1"/>
</dbReference>
<dbReference type="HAMAP" id="MF_00403_B">
    <property type="entry name" value="Ribosomal_uS12_B"/>
    <property type="match status" value="1"/>
</dbReference>
<dbReference type="InterPro" id="IPR012340">
    <property type="entry name" value="NA-bd_OB-fold"/>
</dbReference>
<dbReference type="InterPro" id="IPR006032">
    <property type="entry name" value="Ribosomal_uS12"/>
</dbReference>
<dbReference type="InterPro" id="IPR005679">
    <property type="entry name" value="Ribosomal_uS12_bac"/>
</dbReference>
<dbReference type="NCBIfam" id="TIGR00981">
    <property type="entry name" value="rpsL_bact"/>
    <property type="match status" value="1"/>
</dbReference>
<dbReference type="PANTHER" id="PTHR11652">
    <property type="entry name" value="30S RIBOSOMAL PROTEIN S12 FAMILY MEMBER"/>
    <property type="match status" value="1"/>
</dbReference>
<dbReference type="Pfam" id="PF00164">
    <property type="entry name" value="Ribosom_S12_S23"/>
    <property type="match status" value="1"/>
</dbReference>
<dbReference type="PIRSF" id="PIRSF002133">
    <property type="entry name" value="Ribosomal_S12/S23"/>
    <property type="match status" value="1"/>
</dbReference>
<dbReference type="PRINTS" id="PR01034">
    <property type="entry name" value="RIBOSOMALS12"/>
</dbReference>
<dbReference type="SUPFAM" id="SSF50249">
    <property type="entry name" value="Nucleic acid-binding proteins"/>
    <property type="match status" value="1"/>
</dbReference>
<dbReference type="PROSITE" id="PS00055">
    <property type="entry name" value="RIBOSOMAL_S12"/>
    <property type="match status" value="1"/>
</dbReference>
<protein>
    <recommendedName>
        <fullName evidence="2">Small ribosomal subunit protein uS12</fullName>
    </recommendedName>
    <alternativeName>
        <fullName evidence="4">30S ribosomal protein S12</fullName>
    </alternativeName>
</protein>
<gene>
    <name evidence="2" type="primary">rpsL</name>
    <name type="ordered locus">Bcen2424_0343</name>
</gene>
<organism>
    <name type="scientific">Burkholderia cenocepacia (strain HI2424)</name>
    <dbReference type="NCBI Taxonomy" id="331272"/>
    <lineage>
        <taxon>Bacteria</taxon>
        <taxon>Pseudomonadati</taxon>
        <taxon>Pseudomonadota</taxon>
        <taxon>Betaproteobacteria</taxon>
        <taxon>Burkholderiales</taxon>
        <taxon>Burkholderiaceae</taxon>
        <taxon>Burkholderia</taxon>
        <taxon>Burkholderia cepacia complex</taxon>
    </lineage>
</organism>
<proteinExistence type="inferred from homology"/>
<comment type="function">
    <text evidence="2">With S4 and S5 plays an important role in translational accuracy.</text>
</comment>
<comment type="function">
    <text evidence="2">Interacts with and stabilizes bases of the 16S rRNA that are involved in tRNA selection in the A site and with the mRNA backbone. Located at the interface of the 30S and 50S subunits, it traverses the body of the 30S subunit contacting proteins on the other side and probably holding the rRNA structure together. The combined cluster of proteins S8, S12 and S17 appears to hold together the shoulder and platform of the 30S subunit.</text>
</comment>
<comment type="subunit">
    <text evidence="2">Part of the 30S ribosomal subunit. Contacts proteins S8 and S17. May interact with IF1 in the 30S initiation complex.</text>
</comment>
<comment type="similarity">
    <text evidence="2">Belongs to the universal ribosomal protein uS12 family.</text>
</comment>
<sequence>MPTINQLVRKGRQSETTKSKSPALQDCPQRRGVCTRVYTTTPKKPNSALRKVAKVRLTNGFEVISYIGGEGHNLQEHSVVLIRGGRVKDLPGVRYHMVRGSLDTQGVKDRKQARSKYGAKRAKAAK</sequence>
<name>RS12_BURCH</name>